<comment type="function">
    <text evidence="1">Part of the ABC transporter complex PstSACB involved in phosphate import. Responsible for energy coupling to the transport system.</text>
</comment>
<comment type="catalytic activity">
    <reaction evidence="1">
        <text>phosphate(out) + ATP + H2O = ADP + 2 phosphate(in) + H(+)</text>
        <dbReference type="Rhea" id="RHEA:24440"/>
        <dbReference type="ChEBI" id="CHEBI:15377"/>
        <dbReference type="ChEBI" id="CHEBI:15378"/>
        <dbReference type="ChEBI" id="CHEBI:30616"/>
        <dbReference type="ChEBI" id="CHEBI:43474"/>
        <dbReference type="ChEBI" id="CHEBI:456216"/>
        <dbReference type="EC" id="7.3.2.1"/>
    </reaction>
</comment>
<comment type="subunit">
    <text evidence="1">The complex is composed of two ATP-binding proteins (PstB), two transmembrane proteins (PstC and PstA) and a solute-binding protein (PstS).</text>
</comment>
<comment type="subcellular location">
    <subcellularLocation>
        <location evidence="1">Cell membrane</location>
        <topology evidence="1">Peripheral membrane protein</topology>
    </subcellularLocation>
</comment>
<comment type="similarity">
    <text evidence="1">Belongs to the ABC transporter superfamily. Phosphate importer (TC 3.A.1.7) family.</text>
</comment>
<gene>
    <name evidence="1" type="primary">pstB2</name>
    <name type="ordered locus">M28_Spy0925</name>
</gene>
<protein>
    <recommendedName>
        <fullName evidence="1">Phosphate import ATP-binding protein PstB 2</fullName>
        <ecNumber evidence="1">7.3.2.1</ecNumber>
    </recommendedName>
    <alternativeName>
        <fullName evidence="1">ABC phosphate transporter 2</fullName>
    </alternativeName>
    <alternativeName>
        <fullName evidence="1">Phosphate-transporting ATPase 2</fullName>
    </alternativeName>
</protein>
<keyword id="KW-0067">ATP-binding</keyword>
<keyword id="KW-1003">Cell membrane</keyword>
<keyword id="KW-0472">Membrane</keyword>
<keyword id="KW-0547">Nucleotide-binding</keyword>
<keyword id="KW-0592">Phosphate transport</keyword>
<keyword id="KW-1278">Translocase</keyword>
<keyword id="KW-0813">Transport</keyword>
<name>PSTB2_STRPM</name>
<organism>
    <name type="scientific">Streptococcus pyogenes serotype M28 (strain MGAS6180)</name>
    <dbReference type="NCBI Taxonomy" id="319701"/>
    <lineage>
        <taxon>Bacteria</taxon>
        <taxon>Bacillati</taxon>
        <taxon>Bacillota</taxon>
        <taxon>Bacilli</taxon>
        <taxon>Lactobacillales</taxon>
        <taxon>Streptococcaceae</taxon>
        <taxon>Streptococcus</taxon>
    </lineage>
</organism>
<accession>Q48TC2</accession>
<evidence type="ECO:0000255" key="1">
    <source>
        <dbReference type="HAMAP-Rule" id="MF_01702"/>
    </source>
</evidence>
<proteinExistence type="inferred from homology"/>
<sequence length="267" mass="30482">MTEYNWNERHIITFPEETLALATKDLHVYYGAKEAIKGIDMQFEKHKITALIGPSGCGKSTYLRSLNRMNDTIDIARVTGEILYQGIDVNRKDMNVYEIRKHLGMVFQRPNPFAKSIYKNITFAHERAGVKDKKVLDEIVETSLKQAALWDQVKDDLHKSAFTLSGGQQQRLCIARAISVKPDILLMDEPASALDPIATMQLEETMFELKKNYTIIIVTHNMQQAARASDYTAFFYLGNLIEYDKTRNIFQNAQCQSTNDYVSGHFG</sequence>
<reference key="1">
    <citation type="journal article" date="2005" name="J. Infect. Dis.">
        <title>Genome sequence of a serotype M28 strain of group A Streptococcus: potential new insights into puerperal sepsis and bacterial disease specificity.</title>
        <authorList>
            <person name="Green N.M."/>
            <person name="Zhang S."/>
            <person name="Porcella S.F."/>
            <person name="Nagiec M.J."/>
            <person name="Barbian K.D."/>
            <person name="Beres S.B."/>
            <person name="Lefebvre R.B."/>
            <person name="Musser J.M."/>
        </authorList>
    </citation>
    <scope>NUCLEOTIDE SEQUENCE [LARGE SCALE GENOMIC DNA]</scope>
    <source>
        <strain>MGAS6180</strain>
    </source>
</reference>
<dbReference type="EC" id="7.3.2.1" evidence="1"/>
<dbReference type="EMBL" id="CP000056">
    <property type="protein sequence ID" value="AAX72038.1"/>
    <property type="molecule type" value="Genomic_DNA"/>
</dbReference>
<dbReference type="SMR" id="Q48TC2"/>
<dbReference type="KEGG" id="spb:M28_Spy0925"/>
<dbReference type="HOGENOM" id="CLU_000604_1_22_9"/>
<dbReference type="GO" id="GO:0005886">
    <property type="term" value="C:plasma membrane"/>
    <property type="evidence" value="ECO:0007669"/>
    <property type="project" value="UniProtKB-SubCell"/>
</dbReference>
<dbReference type="GO" id="GO:0005524">
    <property type="term" value="F:ATP binding"/>
    <property type="evidence" value="ECO:0007669"/>
    <property type="project" value="UniProtKB-KW"/>
</dbReference>
<dbReference type="GO" id="GO:0016887">
    <property type="term" value="F:ATP hydrolysis activity"/>
    <property type="evidence" value="ECO:0007669"/>
    <property type="project" value="InterPro"/>
</dbReference>
<dbReference type="GO" id="GO:0015415">
    <property type="term" value="F:ATPase-coupled phosphate ion transmembrane transporter activity"/>
    <property type="evidence" value="ECO:0007669"/>
    <property type="project" value="UniProtKB-EC"/>
</dbReference>
<dbReference type="GO" id="GO:0035435">
    <property type="term" value="P:phosphate ion transmembrane transport"/>
    <property type="evidence" value="ECO:0007669"/>
    <property type="project" value="InterPro"/>
</dbReference>
<dbReference type="CDD" id="cd03260">
    <property type="entry name" value="ABC_PstB_phosphate_transporter"/>
    <property type="match status" value="1"/>
</dbReference>
<dbReference type="Gene3D" id="3.40.50.300">
    <property type="entry name" value="P-loop containing nucleotide triphosphate hydrolases"/>
    <property type="match status" value="1"/>
</dbReference>
<dbReference type="InterPro" id="IPR003593">
    <property type="entry name" value="AAA+_ATPase"/>
</dbReference>
<dbReference type="InterPro" id="IPR003439">
    <property type="entry name" value="ABC_transporter-like_ATP-bd"/>
</dbReference>
<dbReference type="InterPro" id="IPR017871">
    <property type="entry name" value="ABC_transporter-like_CS"/>
</dbReference>
<dbReference type="InterPro" id="IPR027417">
    <property type="entry name" value="P-loop_NTPase"/>
</dbReference>
<dbReference type="InterPro" id="IPR005670">
    <property type="entry name" value="PstB-like"/>
</dbReference>
<dbReference type="NCBIfam" id="TIGR00972">
    <property type="entry name" value="3a0107s01c2"/>
    <property type="match status" value="1"/>
</dbReference>
<dbReference type="PANTHER" id="PTHR43423">
    <property type="entry name" value="ABC TRANSPORTER I FAMILY MEMBER 17"/>
    <property type="match status" value="1"/>
</dbReference>
<dbReference type="PANTHER" id="PTHR43423:SF10">
    <property type="entry name" value="PHOSPHATE IMPORT ATP-BINDING PROTEIN PSTB 2"/>
    <property type="match status" value="1"/>
</dbReference>
<dbReference type="Pfam" id="PF00005">
    <property type="entry name" value="ABC_tran"/>
    <property type="match status" value="1"/>
</dbReference>
<dbReference type="SMART" id="SM00382">
    <property type="entry name" value="AAA"/>
    <property type="match status" value="1"/>
</dbReference>
<dbReference type="SUPFAM" id="SSF52540">
    <property type="entry name" value="P-loop containing nucleoside triphosphate hydrolases"/>
    <property type="match status" value="1"/>
</dbReference>
<dbReference type="PROSITE" id="PS00211">
    <property type="entry name" value="ABC_TRANSPORTER_1"/>
    <property type="match status" value="1"/>
</dbReference>
<dbReference type="PROSITE" id="PS50893">
    <property type="entry name" value="ABC_TRANSPORTER_2"/>
    <property type="match status" value="1"/>
</dbReference>
<dbReference type="PROSITE" id="PS51238">
    <property type="entry name" value="PSTB"/>
    <property type="match status" value="1"/>
</dbReference>
<feature type="chain" id="PRO_0000272548" description="Phosphate import ATP-binding protein PstB 2">
    <location>
        <begin position="1"/>
        <end position="267"/>
    </location>
</feature>
<feature type="domain" description="ABC transporter" evidence="1">
    <location>
        <begin position="21"/>
        <end position="262"/>
    </location>
</feature>
<feature type="binding site" evidence="1">
    <location>
        <begin position="53"/>
        <end position="60"/>
    </location>
    <ligand>
        <name>ATP</name>
        <dbReference type="ChEBI" id="CHEBI:30616"/>
    </ligand>
</feature>